<sequence length="269" mass="30472">MVKISFQPAVAGIKGDKADKASASASAPAPAPAAEILLTPAREERPPHHRYKKGSSVGGVCYLSMGMVVLLMGLVFASVYIYRYFFLAQLARDNFFHCGVLYEDSLSSQARTRMELEEDVKIYLEENYERINVPVPQFGGGDPADIIHDFQRGLTAYHDISLDKCYVIELNTTIVLPPRNFWELLMNVKRGTYLPQTYIIQEEMVVTEHVSDKEALGSFIYHLCNGKDTYRLRRRATRRRINKRGAKNCNAIRHFENTFVVETLICGVV</sequence>
<name>ITM2C_PIG</name>
<accession>Q06AV4</accession>
<dbReference type="EMBL" id="DQ917621">
    <property type="protein sequence ID" value="ABI97166.1"/>
    <property type="molecule type" value="mRNA"/>
</dbReference>
<dbReference type="RefSeq" id="NP_001116603.1">
    <property type="nucleotide sequence ID" value="NM_001123131.1"/>
</dbReference>
<dbReference type="SMR" id="Q06AV4"/>
<dbReference type="FunCoup" id="Q06AV4">
    <property type="interactions" value="748"/>
</dbReference>
<dbReference type="STRING" id="9823.ENSSSCP00000017233"/>
<dbReference type="GlyCosmos" id="Q06AV4">
    <property type="glycosylation" value="1 site, No reported glycans"/>
</dbReference>
<dbReference type="GlyGen" id="Q06AV4">
    <property type="glycosylation" value="1 site"/>
</dbReference>
<dbReference type="PaxDb" id="9823-ENSSSCP00000017233"/>
<dbReference type="PeptideAtlas" id="Q06AV4"/>
<dbReference type="Ensembl" id="ENSSSCT00000087047.2">
    <property type="protein sequence ID" value="ENSSSCP00000060874.1"/>
    <property type="gene ID" value="ENSSSCG00000016267.5"/>
</dbReference>
<dbReference type="Ensembl" id="ENSSSCT00015105243.1">
    <property type="protein sequence ID" value="ENSSSCP00015044080.1"/>
    <property type="gene ID" value="ENSSSCG00015077725.1"/>
</dbReference>
<dbReference type="Ensembl" id="ENSSSCT00030103979.1">
    <property type="protein sequence ID" value="ENSSSCP00030048125.1"/>
    <property type="gene ID" value="ENSSSCG00030074146.1"/>
</dbReference>
<dbReference type="Ensembl" id="ENSSSCT00050091243.1">
    <property type="protein sequence ID" value="ENSSSCP00050039231.1"/>
    <property type="gene ID" value="ENSSSCG00050066946.1"/>
</dbReference>
<dbReference type="Ensembl" id="ENSSSCT00055037279.1">
    <property type="protein sequence ID" value="ENSSSCP00055029616.1"/>
    <property type="gene ID" value="ENSSSCG00055019017.1"/>
</dbReference>
<dbReference type="Ensembl" id="ENSSSCT00060091625.1">
    <property type="protein sequence ID" value="ENSSSCP00060039608.1"/>
    <property type="gene ID" value="ENSSSCG00060067098.1"/>
</dbReference>
<dbReference type="Ensembl" id="ENSSSCT00065109299.1">
    <property type="protein sequence ID" value="ENSSSCP00065049093.1"/>
    <property type="gene ID" value="ENSSSCG00065078733.1"/>
</dbReference>
<dbReference type="Ensembl" id="ENSSSCT00070018000.1">
    <property type="protein sequence ID" value="ENSSSCP00070014943.1"/>
    <property type="gene ID" value="ENSSSCG00070009249.1"/>
</dbReference>
<dbReference type="Ensembl" id="ENSSSCT00085013476">
    <property type="protein sequence ID" value="ENSSSCP00085009828"/>
    <property type="gene ID" value="ENSSSCG00085007054"/>
</dbReference>
<dbReference type="Ensembl" id="ENSSSCT00105067304">
    <property type="protein sequence ID" value="ENSSSCP00105047849"/>
    <property type="gene ID" value="ENSSSCG00105035256"/>
</dbReference>
<dbReference type="Ensembl" id="ENSSSCT00110064631">
    <property type="protein sequence ID" value="ENSSSCP00110045299"/>
    <property type="gene ID" value="ENSSSCG00110033944"/>
</dbReference>
<dbReference type="Ensembl" id="ENSSSCT00115001927">
    <property type="protein sequence ID" value="ENSSSCP00115001790"/>
    <property type="gene ID" value="ENSSSCG00115001147"/>
</dbReference>
<dbReference type="GeneID" id="100144481"/>
<dbReference type="KEGG" id="ssc:100144481"/>
<dbReference type="CTD" id="81618"/>
<dbReference type="VGNC" id="VGNC:96383">
    <property type="gene designation" value="ITM2C"/>
</dbReference>
<dbReference type="eggNOG" id="KOG4681">
    <property type="taxonomic scope" value="Eukaryota"/>
</dbReference>
<dbReference type="GeneTree" id="ENSGT00950000183115"/>
<dbReference type="HOGENOM" id="CLU_074596_0_0_1"/>
<dbReference type="InParanoid" id="Q06AV4"/>
<dbReference type="OMA" id="AGNCNHI"/>
<dbReference type="OrthoDB" id="9982095at2759"/>
<dbReference type="TreeFam" id="TF317770"/>
<dbReference type="Proteomes" id="UP000008227">
    <property type="component" value="Chromosome 15"/>
</dbReference>
<dbReference type="Proteomes" id="UP000314985">
    <property type="component" value="Chromosome 15"/>
</dbReference>
<dbReference type="Proteomes" id="UP000694570">
    <property type="component" value="Unplaced"/>
</dbReference>
<dbReference type="Proteomes" id="UP000694571">
    <property type="component" value="Unplaced"/>
</dbReference>
<dbReference type="Proteomes" id="UP000694720">
    <property type="component" value="Unplaced"/>
</dbReference>
<dbReference type="Proteomes" id="UP000694722">
    <property type="component" value="Unplaced"/>
</dbReference>
<dbReference type="Proteomes" id="UP000694723">
    <property type="component" value="Unplaced"/>
</dbReference>
<dbReference type="Proteomes" id="UP000694724">
    <property type="component" value="Unplaced"/>
</dbReference>
<dbReference type="Proteomes" id="UP000694725">
    <property type="component" value="Unplaced"/>
</dbReference>
<dbReference type="Proteomes" id="UP000694726">
    <property type="component" value="Unplaced"/>
</dbReference>
<dbReference type="Proteomes" id="UP000694727">
    <property type="component" value="Unplaced"/>
</dbReference>
<dbReference type="Proteomes" id="UP000694728">
    <property type="component" value="Unplaced"/>
</dbReference>
<dbReference type="Bgee" id="ENSSSCG00000016267">
    <property type="expression patterns" value="Expressed in prefrontal cortex and 43 other cell types or tissues"/>
</dbReference>
<dbReference type="ExpressionAtlas" id="Q06AV4">
    <property type="expression patterns" value="baseline and differential"/>
</dbReference>
<dbReference type="GO" id="GO:0005794">
    <property type="term" value="C:Golgi apparatus"/>
    <property type="evidence" value="ECO:0000318"/>
    <property type="project" value="GO_Central"/>
</dbReference>
<dbReference type="GO" id="GO:0005765">
    <property type="term" value="C:lysosomal membrane"/>
    <property type="evidence" value="ECO:0007669"/>
    <property type="project" value="UniProtKB-SubCell"/>
</dbReference>
<dbReference type="GO" id="GO:0005764">
    <property type="term" value="C:lysosome"/>
    <property type="evidence" value="ECO:0000250"/>
    <property type="project" value="UniProtKB"/>
</dbReference>
<dbReference type="GO" id="GO:0005886">
    <property type="term" value="C:plasma membrane"/>
    <property type="evidence" value="ECO:0000250"/>
    <property type="project" value="UniProtKB"/>
</dbReference>
<dbReference type="GO" id="GO:0001540">
    <property type="term" value="F:amyloid-beta binding"/>
    <property type="evidence" value="ECO:0000318"/>
    <property type="project" value="GO_Central"/>
</dbReference>
<dbReference type="GO" id="GO:0042985">
    <property type="term" value="P:negative regulation of amyloid precursor protein biosynthetic process"/>
    <property type="evidence" value="ECO:0000318"/>
    <property type="project" value="GO_Central"/>
</dbReference>
<dbReference type="GO" id="GO:0030182">
    <property type="term" value="P:neuron differentiation"/>
    <property type="evidence" value="ECO:0000250"/>
    <property type="project" value="UniProtKB"/>
</dbReference>
<dbReference type="Gene3D" id="3.30.390.150">
    <property type="match status" value="1"/>
</dbReference>
<dbReference type="InterPro" id="IPR007084">
    <property type="entry name" value="BRICHOS_dom"/>
</dbReference>
<dbReference type="InterPro" id="IPR040145">
    <property type="entry name" value="ITM2"/>
</dbReference>
<dbReference type="PANTHER" id="PTHR10962:SF5">
    <property type="entry name" value="INTEGRAL MEMBRANE PROTEIN 2C"/>
    <property type="match status" value="1"/>
</dbReference>
<dbReference type="PANTHER" id="PTHR10962">
    <property type="entry name" value="INTEGRAL TRANSMEMBRANE PROTEIN 2"/>
    <property type="match status" value="1"/>
</dbReference>
<dbReference type="Pfam" id="PF04089">
    <property type="entry name" value="BRICHOS"/>
    <property type="match status" value="1"/>
</dbReference>
<dbReference type="SMART" id="SM01039">
    <property type="entry name" value="BRICHOS"/>
    <property type="match status" value="1"/>
</dbReference>
<dbReference type="PROSITE" id="PS50869">
    <property type="entry name" value="BRICHOS"/>
    <property type="match status" value="1"/>
</dbReference>
<gene>
    <name type="primary">ITM2C</name>
</gene>
<reference key="1">
    <citation type="submission" date="2006-08" db="EMBL/GenBank/DDBJ databases">
        <authorList>
            <person name="Liu G.Y."/>
        </authorList>
    </citation>
    <scope>NUCLEOTIDE SEQUENCE [LARGE SCALE MRNA]</scope>
</reference>
<evidence type="ECO:0000250" key="1"/>
<evidence type="ECO:0000250" key="2">
    <source>
        <dbReference type="UniProtKB" id="Q5PQL7"/>
    </source>
</evidence>
<evidence type="ECO:0000255" key="3"/>
<evidence type="ECO:0000255" key="4">
    <source>
        <dbReference type="PROSITE-ProRule" id="PRU00255"/>
    </source>
</evidence>
<evidence type="ECO:0000305" key="5"/>
<organism>
    <name type="scientific">Sus scrofa</name>
    <name type="common">Pig</name>
    <dbReference type="NCBI Taxonomy" id="9823"/>
    <lineage>
        <taxon>Eukaryota</taxon>
        <taxon>Metazoa</taxon>
        <taxon>Chordata</taxon>
        <taxon>Craniata</taxon>
        <taxon>Vertebrata</taxon>
        <taxon>Euteleostomi</taxon>
        <taxon>Mammalia</taxon>
        <taxon>Eutheria</taxon>
        <taxon>Laurasiatheria</taxon>
        <taxon>Artiodactyla</taxon>
        <taxon>Suina</taxon>
        <taxon>Suidae</taxon>
        <taxon>Sus</taxon>
    </lineage>
</organism>
<protein>
    <recommendedName>
        <fullName>Integral membrane protein 2C</fullName>
    </recommendedName>
    <component>
        <recommendedName>
            <fullName>CT-BRI3</fullName>
        </recommendedName>
    </component>
</protein>
<comment type="function">
    <text evidence="1">Negative regulator of amyloid-beta peptide production. May inhibit the processing of APP by blocking its access to alpha- and beta-secretase. Binding to the beta-secretase-cleaved APP C-terminal fragment is negligible, suggesting that ITM2C is a poor gamma-secretase cleavage inhibitor. May play a role in TNF-induced cell death and neuronal differentiation (By similarity).</text>
</comment>
<comment type="subunit">
    <text evidence="1">Interacts with BACE1. Interacts with APP. Interacts with STMN2 (By similarity).</text>
</comment>
<comment type="subcellular location">
    <subcellularLocation>
        <location evidence="1">Lysosome membrane</location>
        <topology evidence="1">Single-pass type II membrane protein</topology>
    </subcellularLocation>
    <subcellularLocation>
        <location evidence="1">Cell membrane</location>
        <topology evidence="1">Single-pass type II membrane protein</topology>
    </subcellularLocation>
</comment>
<comment type="PTM">
    <text evidence="1">Type I membrane-bound, as well as soluble, furin has a pre-eminent role in ITM2C proteolytic processing. PCSK7 and PCSK5 may also be involved although to a lesser extent. The soluble form of PCSK7 is incapable of processing ITM2C. Fails to undergo shedding by ADAM10 and intramembrane cleavage by SPPL2B (By similarity).</text>
</comment>
<comment type="similarity">
    <text evidence="5">Belongs to the ITM2 family.</text>
</comment>
<feature type="chain" id="PRO_0000295290" description="Integral membrane protein 2C">
    <location>
        <begin position="1"/>
        <end position="269"/>
    </location>
</feature>
<feature type="peptide" id="PRO_0000295291" description="CT-BRI3">
    <location>
        <begin position="245"/>
        <end position="269"/>
    </location>
</feature>
<feature type="transmembrane region" description="Helical; Signal-anchor for type II membrane protein" evidence="3">
    <location>
        <begin position="57"/>
        <end position="77"/>
    </location>
</feature>
<feature type="domain" description="BRICHOS" evidence="4">
    <location>
        <begin position="138"/>
        <end position="232"/>
    </location>
</feature>
<feature type="site" description="Cleavage; by furin" evidence="1">
    <location>
        <begin position="244"/>
        <end position="245"/>
    </location>
</feature>
<feature type="modified residue" description="Phosphothreonine" evidence="2">
    <location>
        <position position="39"/>
    </location>
</feature>
<feature type="glycosylation site" description="N-linked (GlcNAc...) asparagine" evidence="3">
    <location>
        <position position="171"/>
    </location>
</feature>
<feature type="disulfide bond" evidence="1">
    <location>
        <begin position="165"/>
        <end position="224"/>
    </location>
</feature>
<proteinExistence type="evidence at transcript level"/>
<keyword id="KW-1003">Cell membrane</keyword>
<keyword id="KW-0165">Cleavage on pair of basic residues</keyword>
<keyword id="KW-1015">Disulfide bond</keyword>
<keyword id="KW-0325">Glycoprotein</keyword>
<keyword id="KW-0458">Lysosome</keyword>
<keyword id="KW-0472">Membrane</keyword>
<keyword id="KW-0597">Phosphoprotein</keyword>
<keyword id="KW-1185">Reference proteome</keyword>
<keyword id="KW-0735">Signal-anchor</keyword>
<keyword id="KW-0812">Transmembrane</keyword>
<keyword id="KW-1133">Transmembrane helix</keyword>